<name>MURB_THESQ</name>
<evidence type="ECO:0000255" key="1">
    <source>
        <dbReference type="HAMAP-Rule" id="MF_00037"/>
    </source>
</evidence>
<dbReference type="EC" id="1.3.1.98" evidence="1"/>
<dbReference type="EMBL" id="CP000969">
    <property type="protein sequence ID" value="ACB09466.1"/>
    <property type="molecule type" value="Genomic_DNA"/>
</dbReference>
<dbReference type="RefSeq" id="WP_012310955.1">
    <property type="nucleotide sequence ID" value="NC_010483.1"/>
</dbReference>
<dbReference type="SMR" id="B1LAW8"/>
<dbReference type="KEGG" id="trq:TRQ2_1120"/>
<dbReference type="HOGENOM" id="CLU_035304_1_1_0"/>
<dbReference type="UniPathway" id="UPA00219"/>
<dbReference type="Proteomes" id="UP000001687">
    <property type="component" value="Chromosome"/>
</dbReference>
<dbReference type="GO" id="GO:0005829">
    <property type="term" value="C:cytosol"/>
    <property type="evidence" value="ECO:0007669"/>
    <property type="project" value="TreeGrafter"/>
</dbReference>
<dbReference type="GO" id="GO:0071949">
    <property type="term" value="F:FAD binding"/>
    <property type="evidence" value="ECO:0007669"/>
    <property type="project" value="InterPro"/>
</dbReference>
<dbReference type="GO" id="GO:0008762">
    <property type="term" value="F:UDP-N-acetylmuramate dehydrogenase activity"/>
    <property type="evidence" value="ECO:0007669"/>
    <property type="project" value="UniProtKB-UniRule"/>
</dbReference>
<dbReference type="GO" id="GO:0051301">
    <property type="term" value="P:cell division"/>
    <property type="evidence" value="ECO:0007669"/>
    <property type="project" value="UniProtKB-KW"/>
</dbReference>
<dbReference type="GO" id="GO:0071555">
    <property type="term" value="P:cell wall organization"/>
    <property type="evidence" value="ECO:0007669"/>
    <property type="project" value="UniProtKB-KW"/>
</dbReference>
<dbReference type="GO" id="GO:0009252">
    <property type="term" value="P:peptidoglycan biosynthetic process"/>
    <property type="evidence" value="ECO:0007669"/>
    <property type="project" value="UniProtKB-UniRule"/>
</dbReference>
<dbReference type="GO" id="GO:0008360">
    <property type="term" value="P:regulation of cell shape"/>
    <property type="evidence" value="ECO:0007669"/>
    <property type="project" value="UniProtKB-KW"/>
</dbReference>
<dbReference type="Gene3D" id="3.30.465.10">
    <property type="match status" value="1"/>
</dbReference>
<dbReference type="Gene3D" id="3.90.78.10">
    <property type="entry name" value="UDP-N-acetylenolpyruvoylglucosamine reductase, C-terminal domain"/>
    <property type="match status" value="1"/>
</dbReference>
<dbReference type="Gene3D" id="3.30.43.10">
    <property type="entry name" value="Uridine Diphospho-n-acetylenolpyruvylglucosamine Reductase, domain 2"/>
    <property type="match status" value="1"/>
</dbReference>
<dbReference type="HAMAP" id="MF_00037">
    <property type="entry name" value="MurB"/>
    <property type="match status" value="1"/>
</dbReference>
<dbReference type="InterPro" id="IPR016166">
    <property type="entry name" value="FAD-bd_PCMH"/>
</dbReference>
<dbReference type="InterPro" id="IPR036318">
    <property type="entry name" value="FAD-bd_PCMH-like_sf"/>
</dbReference>
<dbReference type="InterPro" id="IPR016167">
    <property type="entry name" value="FAD-bd_PCMH_sub1"/>
</dbReference>
<dbReference type="InterPro" id="IPR016169">
    <property type="entry name" value="FAD-bd_PCMH_sub2"/>
</dbReference>
<dbReference type="InterPro" id="IPR003170">
    <property type="entry name" value="MurB"/>
</dbReference>
<dbReference type="InterPro" id="IPR011601">
    <property type="entry name" value="MurB_C"/>
</dbReference>
<dbReference type="InterPro" id="IPR036635">
    <property type="entry name" value="MurB_C_sf"/>
</dbReference>
<dbReference type="InterPro" id="IPR006094">
    <property type="entry name" value="Oxid_FAD_bind_N"/>
</dbReference>
<dbReference type="NCBIfam" id="TIGR00179">
    <property type="entry name" value="murB"/>
    <property type="match status" value="1"/>
</dbReference>
<dbReference type="NCBIfam" id="NF010480">
    <property type="entry name" value="PRK13905.1"/>
    <property type="match status" value="1"/>
</dbReference>
<dbReference type="PANTHER" id="PTHR21071">
    <property type="entry name" value="UDP-N-ACETYLENOLPYRUVOYLGLUCOSAMINE REDUCTASE"/>
    <property type="match status" value="1"/>
</dbReference>
<dbReference type="PANTHER" id="PTHR21071:SF4">
    <property type="entry name" value="UDP-N-ACETYLENOLPYRUVOYLGLUCOSAMINE REDUCTASE"/>
    <property type="match status" value="1"/>
</dbReference>
<dbReference type="Pfam" id="PF01565">
    <property type="entry name" value="FAD_binding_4"/>
    <property type="match status" value="1"/>
</dbReference>
<dbReference type="Pfam" id="PF02873">
    <property type="entry name" value="MurB_C"/>
    <property type="match status" value="1"/>
</dbReference>
<dbReference type="SUPFAM" id="SSF56176">
    <property type="entry name" value="FAD-binding/transporter-associated domain-like"/>
    <property type="match status" value="1"/>
</dbReference>
<dbReference type="SUPFAM" id="SSF56194">
    <property type="entry name" value="Uridine diphospho-N-Acetylenolpyruvylglucosamine reductase, MurB, C-terminal domain"/>
    <property type="match status" value="1"/>
</dbReference>
<dbReference type="PROSITE" id="PS51387">
    <property type="entry name" value="FAD_PCMH"/>
    <property type="match status" value="1"/>
</dbReference>
<keyword id="KW-0131">Cell cycle</keyword>
<keyword id="KW-0132">Cell division</keyword>
<keyword id="KW-0133">Cell shape</keyword>
<keyword id="KW-0961">Cell wall biogenesis/degradation</keyword>
<keyword id="KW-0963">Cytoplasm</keyword>
<keyword id="KW-0274">FAD</keyword>
<keyword id="KW-0285">Flavoprotein</keyword>
<keyword id="KW-0521">NADP</keyword>
<keyword id="KW-0560">Oxidoreductase</keyword>
<keyword id="KW-0573">Peptidoglycan synthesis</keyword>
<sequence>MDKIFESLYKAGCDVRMFEKLSCHTSIKIGGRVKYLVLPNDVFSLERAITVLKDFPFQIMGLGTNLLVQDEDLDIAVLKTERLNQIEIKGEKVLVESGTPLKRLCLFLMEAELGGLEFAYGIPGSVGGAIFMNAGAYGGEIGEFIEAVEVLKDGRKIWLSKNEIFFGYRDSTFKREKLIITRAMMSFKKEKKETIKAKMEDYMRRRLEKQPLDLPSAGSVFKRPREDFYVGKAIESLGLKGYRIGGAQISEKHAGFIVNTGSATFDDVMKLIEFVRKKVKEKYGVELETEVEIWWNGRQW</sequence>
<comment type="function">
    <text evidence="1">Cell wall formation.</text>
</comment>
<comment type="catalytic activity">
    <reaction evidence="1">
        <text>UDP-N-acetyl-alpha-D-muramate + NADP(+) = UDP-N-acetyl-3-O-(1-carboxyvinyl)-alpha-D-glucosamine + NADPH + H(+)</text>
        <dbReference type="Rhea" id="RHEA:12248"/>
        <dbReference type="ChEBI" id="CHEBI:15378"/>
        <dbReference type="ChEBI" id="CHEBI:57783"/>
        <dbReference type="ChEBI" id="CHEBI:58349"/>
        <dbReference type="ChEBI" id="CHEBI:68483"/>
        <dbReference type="ChEBI" id="CHEBI:70757"/>
        <dbReference type="EC" id="1.3.1.98"/>
    </reaction>
</comment>
<comment type="cofactor">
    <cofactor evidence="1">
        <name>FAD</name>
        <dbReference type="ChEBI" id="CHEBI:57692"/>
    </cofactor>
</comment>
<comment type="pathway">
    <text evidence="1">Cell wall biogenesis; peptidoglycan biosynthesis.</text>
</comment>
<comment type="subcellular location">
    <subcellularLocation>
        <location evidence="1">Cytoplasm</location>
    </subcellularLocation>
</comment>
<comment type="similarity">
    <text evidence="1">Belongs to the MurB family.</text>
</comment>
<reference key="1">
    <citation type="journal article" date="2011" name="J. Bacteriol.">
        <title>Genome sequence of Thermotoga sp. strain RQ2, a hyperthermophilic bacterium isolated from a geothermally heated region of the seafloor near Ribeira Quente, the Azores.</title>
        <authorList>
            <person name="Swithers K.S."/>
            <person name="DiPippo J.L."/>
            <person name="Bruce D.C."/>
            <person name="Detter C."/>
            <person name="Tapia R."/>
            <person name="Han S."/>
            <person name="Saunders E."/>
            <person name="Goodwin L.A."/>
            <person name="Han J."/>
            <person name="Woyke T."/>
            <person name="Pitluck S."/>
            <person name="Pennacchio L."/>
            <person name="Nolan M."/>
            <person name="Mikhailova N."/>
            <person name="Lykidis A."/>
            <person name="Land M.L."/>
            <person name="Brettin T."/>
            <person name="Stetter K.O."/>
            <person name="Nelson K.E."/>
            <person name="Gogarten J.P."/>
            <person name="Noll K.M."/>
        </authorList>
    </citation>
    <scope>NUCLEOTIDE SEQUENCE [LARGE SCALE GENOMIC DNA]</scope>
    <source>
        <strain>RQ2</strain>
    </source>
</reference>
<accession>B1LAW8</accession>
<organism>
    <name type="scientific">Thermotoga sp. (strain RQ2)</name>
    <dbReference type="NCBI Taxonomy" id="126740"/>
    <lineage>
        <taxon>Bacteria</taxon>
        <taxon>Thermotogati</taxon>
        <taxon>Thermotogota</taxon>
        <taxon>Thermotogae</taxon>
        <taxon>Thermotogales</taxon>
        <taxon>Thermotogaceae</taxon>
        <taxon>Thermotoga</taxon>
    </lineage>
</organism>
<proteinExistence type="inferred from homology"/>
<protein>
    <recommendedName>
        <fullName evidence="1">UDP-N-acetylenolpyruvoylglucosamine reductase</fullName>
        <ecNumber evidence="1">1.3.1.98</ecNumber>
    </recommendedName>
    <alternativeName>
        <fullName evidence="1">UDP-N-acetylmuramate dehydrogenase</fullName>
    </alternativeName>
</protein>
<gene>
    <name evidence="1" type="primary">murB</name>
    <name type="ordered locus">TRQ2_1120</name>
</gene>
<feature type="chain" id="PRO_1000202058" description="UDP-N-acetylenolpyruvoylglucosamine reductase">
    <location>
        <begin position="1"/>
        <end position="300"/>
    </location>
</feature>
<feature type="domain" description="FAD-binding PCMH-type" evidence="1">
    <location>
        <begin position="28"/>
        <end position="190"/>
    </location>
</feature>
<feature type="active site" evidence="1">
    <location>
        <position position="169"/>
    </location>
</feature>
<feature type="active site" description="Proton donor" evidence="1">
    <location>
        <position position="219"/>
    </location>
</feature>
<feature type="active site" evidence="1">
    <location>
        <position position="290"/>
    </location>
</feature>